<comment type="function">
    <text evidence="1">Catalyzes the condensation of carbamoyl phosphate and aspartate to form carbamoyl aspartate and inorganic phosphate, the committed step in the de novo pyrimidine nucleotide biosynthesis pathway.</text>
</comment>
<comment type="catalytic activity">
    <reaction evidence="1">
        <text>carbamoyl phosphate + L-aspartate = N-carbamoyl-L-aspartate + phosphate + H(+)</text>
        <dbReference type="Rhea" id="RHEA:20013"/>
        <dbReference type="ChEBI" id="CHEBI:15378"/>
        <dbReference type="ChEBI" id="CHEBI:29991"/>
        <dbReference type="ChEBI" id="CHEBI:32814"/>
        <dbReference type="ChEBI" id="CHEBI:43474"/>
        <dbReference type="ChEBI" id="CHEBI:58228"/>
        <dbReference type="EC" id="2.1.3.2"/>
    </reaction>
</comment>
<comment type="pathway">
    <text evidence="1">Pyrimidine metabolism; UMP biosynthesis via de novo pathway; (S)-dihydroorotate from bicarbonate: step 2/3.</text>
</comment>
<comment type="subunit">
    <text evidence="1">Heterododecamer (2C3:3R2) of six catalytic PyrB chains organized as two trimers (C3), and six regulatory PyrI chains organized as three dimers (R2).</text>
</comment>
<comment type="similarity">
    <text evidence="1">Belongs to the aspartate/ornithine carbamoyltransferase superfamily. ATCase family.</text>
</comment>
<proteinExistence type="inferred from homology"/>
<sequence length="310" mass="33786">MGFRHKDIIALKDLTKEEITLLLDTADSLSEINQRDIKKVPTLRGKTVINLFYEASTRTRTSFEIAAKRLSADAVNITASTSSVVKGETLSDTANNLLAMKPDIIVMRHAVSGAHEYLAKRVSCSVINAGDGAHEHPSQGLLDMLTMRQKFGKLDGLKVAIIGDITHSRVARSDIYGLTTMGSHVFLAGPPTMMPVGIERLGNVTVCKDMREAVDKADVVMMLRIQLERQGKTLLPSMREYSRYFGLNPEVLGLAKKNAIVMHPGPINRGVELASSVADCDQSAILTQVENGVAVRMAMLYHVCGGEPVE</sequence>
<accession>B5EB49</accession>
<gene>
    <name evidence="1" type="primary">pyrB</name>
    <name type="ordered locus">Gbem_1896</name>
</gene>
<dbReference type="EC" id="2.1.3.2" evidence="1"/>
<dbReference type="EMBL" id="CP001124">
    <property type="protein sequence ID" value="ACH38910.1"/>
    <property type="molecule type" value="Genomic_DNA"/>
</dbReference>
<dbReference type="RefSeq" id="WP_012530328.1">
    <property type="nucleotide sequence ID" value="NC_011146.1"/>
</dbReference>
<dbReference type="SMR" id="B5EB49"/>
<dbReference type="STRING" id="404380.Gbem_1896"/>
<dbReference type="KEGG" id="gbm:Gbem_1896"/>
<dbReference type="eggNOG" id="COG0540">
    <property type="taxonomic scope" value="Bacteria"/>
</dbReference>
<dbReference type="HOGENOM" id="CLU_043846_2_0_7"/>
<dbReference type="OrthoDB" id="9774690at2"/>
<dbReference type="UniPathway" id="UPA00070">
    <property type="reaction ID" value="UER00116"/>
</dbReference>
<dbReference type="Proteomes" id="UP000008825">
    <property type="component" value="Chromosome"/>
</dbReference>
<dbReference type="GO" id="GO:0005829">
    <property type="term" value="C:cytosol"/>
    <property type="evidence" value="ECO:0007669"/>
    <property type="project" value="TreeGrafter"/>
</dbReference>
<dbReference type="GO" id="GO:0016597">
    <property type="term" value="F:amino acid binding"/>
    <property type="evidence" value="ECO:0007669"/>
    <property type="project" value="InterPro"/>
</dbReference>
<dbReference type="GO" id="GO:0004070">
    <property type="term" value="F:aspartate carbamoyltransferase activity"/>
    <property type="evidence" value="ECO:0007669"/>
    <property type="project" value="UniProtKB-UniRule"/>
</dbReference>
<dbReference type="GO" id="GO:0006207">
    <property type="term" value="P:'de novo' pyrimidine nucleobase biosynthetic process"/>
    <property type="evidence" value="ECO:0007669"/>
    <property type="project" value="InterPro"/>
</dbReference>
<dbReference type="GO" id="GO:0044205">
    <property type="term" value="P:'de novo' UMP biosynthetic process"/>
    <property type="evidence" value="ECO:0007669"/>
    <property type="project" value="UniProtKB-UniRule"/>
</dbReference>
<dbReference type="GO" id="GO:0006520">
    <property type="term" value="P:amino acid metabolic process"/>
    <property type="evidence" value="ECO:0007669"/>
    <property type="project" value="InterPro"/>
</dbReference>
<dbReference type="FunFam" id="3.40.50.1370:FF:000007">
    <property type="entry name" value="Aspartate carbamoyltransferase"/>
    <property type="match status" value="1"/>
</dbReference>
<dbReference type="Gene3D" id="3.40.50.1370">
    <property type="entry name" value="Aspartate/ornithine carbamoyltransferase"/>
    <property type="match status" value="2"/>
</dbReference>
<dbReference type="HAMAP" id="MF_00001">
    <property type="entry name" value="Asp_carb_tr"/>
    <property type="match status" value="1"/>
</dbReference>
<dbReference type="InterPro" id="IPR006132">
    <property type="entry name" value="Asp/Orn_carbamoyltranf_P-bd"/>
</dbReference>
<dbReference type="InterPro" id="IPR006130">
    <property type="entry name" value="Asp/Orn_carbamoylTrfase"/>
</dbReference>
<dbReference type="InterPro" id="IPR036901">
    <property type="entry name" value="Asp/Orn_carbamoylTrfase_sf"/>
</dbReference>
<dbReference type="InterPro" id="IPR002082">
    <property type="entry name" value="Asp_carbamoyltransf"/>
</dbReference>
<dbReference type="InterPro" id="IPR006131">
    <property type="entry name" value="Asp_carbamoyltransf_Asp/Orn-bd"/>
</dbReference>
<dbReference type="NCBIfam" id="TIGR00670">
    <property type="entry name" value="asp_carb_tr"/>
    <property type="match status" value="1"/>
</dbReference>
<dbReference type="NCBIfam" id="NF002032">
    <property type="entry name" value="PRK00856.1"/>
    <property type="match status" value="1"/>
</dbReference>
<dbReference type="PANTHER" id="PTHR45753:SF6">
    <property type="entry name" value="ASPARTATE CARBAMOYLTRANSFERASE"/>
    <property type="match status" value="1"/>
</dbReference>
<dbReference type="PANTHER" id="PTHR45753">
    <property type="entry name" value="ORNITHINE CARBAMOYLTRANSFERASE, MITOCHONDRIAL"/>
    <property type="match status" value="1"/>
</dbReference>
<dbReference type="Pfam" id="PF00185">
    <property type="entry name" value="OTCace"/>
    <property type="match status" value="1"/>
</dbReference>
<dbReference type="Pfam" id="PF02729">
    <property type="entry name" value="OTCace_N"/>
    <property type="match status" value="1"/>
</dbReference>
<dbReference type="PRINTS" id="PR00100">
    <property type="entry name" value="AOTCASE"/>
</dbReference>
<dbReference type="PRINTS" id="PR00101">
    <property type="entry name" value="ATCASE"/>
</dbReference>
<dbReference type="SUPFAM" id="SSF53671">
    <property type="entry name" value="Aspartate/ornithine carbamoyltransferase"/>
    <property type="match status" value="1"/>
</dbReference>
<dbReference type="PROSITE" id="PS00097">
    <property type="entry name" value="CARBAMOYLTRANSFERASE"/>
    <property type="match status" value="1"/>
</dbReference>
<evidence type="ECO:0000255" key="1">
    <source>
        <dbReference type="HAMAP-Rule" id="MF_00001"/>
    </source>
</evidence>
<organism>
    <name type="scientific">Citrifermentans bemidjiense (strain ATCC BAA-1014 / DSM 16622 / JCM 12645 / Bem)</name>
    <name type="common">Geobacter bemidjiensis</name>
    <dbReference type="NCBI Taxonomy" id="404380"/>
    <lineage>
        <taxon>Bacteria</taxon>
        <taxon>Pseudomonadati</taxon>
        <taxon>Thermodesulfobacteriota</taxon>
        <taxon>Desulfuromonadia</taxon>
        <taxon>Geobacterales</taxon>
        <taxon>Geobacteraceae</taxon>
        <taxon>Citrifermentans</taxon>
    </lineage>
</organism>
<feature type="chain" id="PRO_1000088765" description="Aspartate carbamoyltransferase catalytic subunit">
    <location>
        <begin position="1"/>
        <end position="310"/>
    </location>
</feature>
<feature type="binding site" evidence="1">
    <location>
        <position position="58"/>
    </location>
    <ligand>
        <name>carbamoyl phosphate</name>
        <dbReference type="ChEBI" id="CHEBI:58228"/>
    </ligand>
</feature>
<feature type="binding site" evidence="1">
    <location>
        <position position="59"/>
    </location>
    <ligand>
        <name>carbamoyl phosphate</name>
        <dbReference type="ChEBI" id="CHEBI:58228"/>
    </ligand>
</feature>
<feature type="binding site" evidence="1">
    <location>
        <position position="86"/>
    </location>
    <ligand>
        <name>L-aspartate</name>
        <dbReference type="ChEBI" id="CHEBI:29991"/>
    </ligand>
</feature>
<feature type="binding site" evidence="1">
    <location>
        <position position="108"/>
    </location>
    <ligand>
        <name>carbamoyl phosphate</name>
        <dbReference type="ChEBI" id="CHEBI:58228"/>
    </ligand>
</feature>
<feature type="binding site" evidence="1">
    <location>
        <position position="136"/>
    </location>
    <ligand>
        <name>carbamoyl phosphate</name>
        <dbReference type="ChEBI" id="CHEBI:58228"/>
    </ligand>
</feature>
<feature type="binding site" evidence="1">
    <location>
        <position position="139"/>
    </location>
    <ligand>
        <name>carbamoyl phosphate</name>
        <dbReference type="ChEBI" id="CHEBI:58228"/>
    </ligand>
</feature>
<feature type="binding site" evidence="1">
    <location>
        <position position="169"/>
    </location>
    <ligand>
        <name>L-aspartate</name>
        <dbReference type="ChEBI" id="CHEBI:29991"/>
    </ligand>
</feature>
<feature type="binding site" evidence="1">
    <location>
        <position position="224"/>
    </location>
    <ligand>
        <name>L-aspartate</name>
        <dbReference type="ChEBI" id="CHEBI:29991"/>
    </ligand>
</feature>
<feature type="binding site" evidence="1">
    <location>
        <position position="265"/>
    </location>
    <ligand>
        <name>carbamoyl phosphate</name>
        <dbReference type="ChEBI" id="CHEBI:58228"/>
    </ligand>
</feature>
<feature type="binding site" evidence="1">
    <location>
        <position position="266"/>
    </location>
    <ligand>
        <name>carbamoyl phosphate</name>
        <dbReference type="ChEBI" id="CHEBI:58228"/>
    </ligand>
</feature>
<name>PYRB_CITBB</name>
<reference key="1">
    <citation type="submission" date="2008-07" db="EMBL/GenBank/DDBJ databases">
        <title>Complete sequence of Geobacter bemidjiensis BEM.</title>
        <authorList>
            <consortium name="US DOE Joint Genome Institute"/>
            <person name="Lucas S."/>
            <person name="Copeland A."/>
            <person name="Lapidus A."/>
            <person name="Glavina del Rio T."/>
            <person name="Dalin E."/>
            <person name="Tice H."/>
            <person name="Bruce D."/>
            <person name="Goodwin L."/>
            <person name="Pitluck S."/>
            <person name="Kiss H."/>
            <person name="Brettin T."/>
            <person name="Detter J.C."/>
            <person name="Han C."/>
            <person name="Kuske C.R."/>
            <person name="Schmutz J."/>
            <person name="Larimer F."/>
            <person name="Land M."/>
            <person name="Hauser L."/>
            <person name="Kyrpides N."/>
            <person name="Lykidis A."/>
            <person name="Lovley D."/>
            <person name="Richardson P."/>
        </authorList>
    </citation>
    <scope>NUCLEOTIDE SEQUENCE [LARGE SCALE GENOMIC DNA]</scope>
    <source>
        <strain>ATCC BAA-1014 / DSM 16622 / JCM 12645 / Bem</strain>
    </source>
</reference>
<keyword id="KW-0665">Pyrimidine biosynthesis</keyword>
<keyword id="KW-1185">Reference proteome</keyword>
<keyword id="KW-0808">Transferase</keyword>
<protein>
    <recommendedName>
        <fullName evidence="1">Aspartate carbamoyltransferase catalytic subunit</fullName>
        <ecNumber evidence="1">2.1.3.2</ecNumber>
    </recommendedName>
    <alternativeName>
        <fullName evidence="1">Aspartate transcarbamylase</fullName>
        <shortName evidence="1">ATCase</shortName>
    </alternativeName>
</protein>